<proteinExistence type="inferred from homology"/>
<accession>B2RL41</accession>
<keyword id="KW-0067">ATP-binding</keyword>
<keyword id="KW-0963">Cytoplasm</keyword>
<keyword id="KW-0227">DNA damage</keyword>
<keyword id="KW-0234">DNA repair</keyword>
<keyword id="KW-0235">DNA replication</keyword>
<keyword id="KW-0238">DNA-binding</keyword>
<keyword id="KW-0547">Nucleotide-binding</keyword>
<keyword id="KW-0742">SOS response</keyword>
<feature type="chain" id="PRO_1000121137" description="DNA replication and repair protein RecF">
    <location>
        <begin position="1"/>
        <end position="364"/>
    </location>
</feature>
<feature type="binding site" evidence="1">
    <location>
        <begin position="30"/>
        <end position="37"/>
    </location>
    <ligand>
        <name>ATP</name>
        <dbReference type="ChEBI" id="CHEBI:30616"/>
    </ligand>
</feature>
<reference key="1">
    <citation type="journal article" date="2008" name="DNA Res.">
        <title>Determination of the genome sequence of Porphyromonas gingivalis strain ATCC 33277 and genomic comparison with strain W83 revealed extensive genome rearrangements in P. gingivalis.</title>
        <authorList>
            <person name="Naito M."/>
            <person name="Hirakawa H."/>
            <person name="Yamashita A."/>
            <person name="Ohara N."/>
            <person name="Shoji M."/>
            <person name="Yukitake H."/>
            <person name="Nakayama K."/>
            <person name="Toh H."/>
            <person name="Yoshimura F."/>
            <person name="Kuhara S."/>
            <person name="Hattori M."/>
            <person name="Hayashi T."/>
            <person name="Nakayama K."/>
        </authorList>
    </citation>
    <scope>NUCLEOTIDE SEQUENCE [LARGE SCALE GENOMIC DNA]</scope>
    <source>
        <strain>ATCC 33277 / DSM 20709 / CIP 103683 / JCM 12257 / NCTC 11834 / 2561</strain>
    </source>
</reference>
<evidence type="ECO:0000255" key="1">
    <source>
        <dbReference type="HAMAP-Rule" id="MF_00365"/>
    </source>
</evidence>
<dbReference type="EMBL" id="AP009380">
    <property type="protein sequence ID" value="BAG34086.1"/>
    <property type="molecule type" value="Genomic_DNA"/>
</dbReference>
<dbReference type="RefSeq" id="WP_012458379.1">
    <property type="nucleotide sequence ID" value="NC_010729.1"/>
</dbReference>
<dbReference type="SMR" id="B2RL41"/>
<dbReference type="GeneID" id="29256741"/>
<dbReference type="KEGG" id="pgn:PGN_1567"/>
<dbReference type="eggNOG" id="COG1195">
    <property type="taxonomic scope" value="Bacteria"/>
</dbReference>
<dbReference type="HOGENOM" id="CLU_040267_0_1_10"/>
<dbReference type="OrthoDB" id="9803889at2"/>
<dbReference type="BioCyc" id="PGIN431947:G1G2V-1767-MONOMER"/>
<dbReference type="Proteomes" id="UP000008842">
    <property type="component" value="Chromosome"/>
</dbReference>
<dbReference type="GO" id="GO:0005737">
    <property type="term" value="C:cytoplasm"/>
    <property type="evidence" value="ECO:0007669"/>
    <property type="project" value="UniProtKB-SubCell"/>
</dbReference>
<dbReference type="GO" id="GO:0005524">
    <property type="term" value="F:ATP binding"/>
    <property type="evidence" value="ECO:0007669"/>
    <property type="project" value="UniProtKB-UniRule"/>
</dbReference>
<dbReference type="GO" id="GO:0003697">
    <property type="term" value="F:single-stranded DNA binding"/>
    <property type="evidence" value="ECO:0007669"/>
    <property type="project" value="UniProtKB-UniRule"/>
</dbReference>
<dbReference type="GO" id="GO:0006260">
    <property type="term" value="P:DNA replication"/>
    <property type="evidence" value="ECO:0007669"/>
    <property type="project" value="UniProtKB-UniRule"/>
</dbReference>
<dbReference type="GO" id="GO:0000731">
    <property type="term" value="P:DNA synthesis involved in DNA repair"/>
    <property type="evidence" value="ECO:0007669"/>
    <property type="project" value="TreeGrafter"/>
</dbReference>
<dbReference type="GO" id="GO:0006302">
    <property type="term" value="P:double-strand break repair"/>
    <property type="evidence" value="ECO:0007669"/>
    <property type="project" value="TreeGrafter"/>
</dbReference>
<dbReference type="GO" id="GO:0009432">
    <property type="term" value="P:SOS response"/>
    <property type="evidence" value="ECO:0007669"/>
    <property type="project" value="UniProtKB-UniRule"/>
</dbReference>
<dbReference type="Gene3D" id="3.40.50.300">
    <property type="entry name" value="P-loop containing nucleotide triphosphate hydrolases"/>
    <property type="match status" value="1"/>
</dbReference>
<dbReference type="Gene3D" id="1.20.1050.90">
    <property type="entry name" value="RecF/RecN/SMC, N-terminal domain"/>
    <property type="match status" value="1"/>
</dbReference>
<dbReference type="HAMAP" id="MF_00365">
    <property type="entry name" value="RecF"/>
    <property type="match status" value="1"/>
</dbReference>
<dbReference type="InterPro" id="IPR001238">
    <property type="entry name" value="DNA-binding_RecF"/>
</dbReference>
<dbReference type="InterPro" id="IPR018078">
    <property type="entry name" value="DNA-binding_RecF_CS"/>
</dbReference>
<dbReference type="InterPro" id="IPR027417">
    <property type="entry name" value="P-loop_NTPase"/>
</dbReference>
<dbReference type="InterPro" id="IPR003395">
    <property type="entry name" value="RecF/RecN/SMC_N"/>
</dbReference>
<dbReference type="InterPro" id="IPR042174">
    <property type="entry name" value="RecF_2"/>
</dbReference>
<dbReference type="NCBIfam" id="TIGR00611">
    <property type="entry name" value="recf"/>
    <property type="match status" value="1"/>
</dbReference>
<dbReference type="PANTHER" id="PTHR32182">
    <property type="entry name" value="DNA REPLICATION AND REPAIR PROTEIN RECF"/>
    <property type="match status" value="1"/>
</dbReference>
<dbReference type="PANTHER" id="PTHR32182:SF0">
    <property type="entry name" value="DNA REPLICATION AND REPAIR PROTEIN RECF"/>
    <property type="match status" value="1"/>
</dbReference>
<dbReference type="Pfam" id="PF02463">
    <property type="entry name" value="SMC_N"/>
    <property type="match status" value="1"/>
</dbReference>
<dbReference type="SUPFAM" id="SSF52540">
    <property type="entry name" value="P-loop containing nucleoside triphosphate hydrolases"/>
    <property type="match status" value="1"/>
</dbReference>
<dbReference type="PROSITE" id="PS00617">
    <property type="entry name" value="RECF_1"/>
    <property type="match status" value="1"/>
</dbReference>
<dbReference type="PROSITE" id="PS00618">
    <property type="entry name" value="RECF_2"/>
    <property type="match status" value="1"/>
</dbReference>
<comment type="function">
    <text evidence="1">The RecF protein is involved in DNA metabolism; it is required for DNA replication and normal SOS inducibility. RecF binds preferentially to single-stranded, linear DNA. It also seems to bind ATP.</text>
</comment>
<comment type="subcellular location">
    <subcellularLocation>
        <location evidence="1">Cytoplasm</location>
    </subcellularLocation>
</comment>
<comment type="similarity">
    <text evidence="1">Belongs to the RecF family.</text>
</comment>
<gene>
    <name evidence="1" type="primary">recF</name>
    <name type="ordered locus">PGN_1567</name>
</gene>
<name>RECF_PORG3</name>
<organism>
    <name type="scientific">Porphyromonas gingivalis (strain ATCC 33277 / DSM 20709 / CIP 103683 / JCM 12257 / NCTC 11834 / 2561)</name>
    <dbReference type="NCBI Taxonomy" id="431947"/>
    <lineage>
        <taxon>Bacteria</taxon>
        <taxon>Pseudomonadati</taxon>
        <taxon>Bacteroidota</taxon>
        <taxon>Bacteroidia</taxon>
        <taxon>Bacteroidales</taxon>
        <taxon>Porphyromonadaceae</taxon>
        <taxon>Porphyromonas</taxon>
    </lineage>
</organism>
<protein>
    <recommendedName>
        <fullName evidence="1">DNA replication and repair protein RecF</fullName>
    </recommendedName>
</protein>
<sequence length="364" mass="41853">MIIEELHIVNFKSIAAADCRFSPKVNCLVGNNGMGKTNLLDALHFLSFCRSHLSVPDNMVVRHGEEMALLQGLYRDESGDGIELLLSIRPGKHKVLRRNKKEYERLSDHIGHFPLVIVSPQDYQLILGGSDERRRFMDQQLCQQDPRYLSALIQYNRHLQQRNTMLKQDRHDDALMDVLELQMGSYAAEIYNKRSRFIEDFLPVFNDLYSDISGSAEKVSLSYRSHLADGIPLEELLRRSRPKDYLLGFSSCGVHKDELEMLLGGVLIRKIGSEGQNKTFLISMKLAQFRHQQLHGDETPILLLDDIFDKLDATRVERIIRLVGGNGFGQIFITDTNRKNLDEIIASWSEDYRLFEIENGQIFQ</sequence>